<feature type="chain" id="PRO_0000150269" description="Cysteine desulfurase IscS">
    <location>
        <begin position="1"/>
        <end position="387"/>
    </location>
</feature>
<feature type="active site" description="Cysteine persulfide intermediate" evidence="1">
    <location>
        <position position="328"/>
    </location>
</feature>
<feature type="binding site" evidence="1">
    <location>
        <begin position="73"/>
        <end position="74"/>
    </location>
    <ligand>
        <name>pyridoxal 5'-phosphate</name>
        <dbReference type="ChEBI" id="CHEBI:597326"/>
    </ligand>
</feature>
<feature type="binding site" evidence="1">
    <location>
        <position position="155"/>
    </location>
    <ligand>
        <name>pyridoxal 5'-phosphate</name>
        <dbReference type="ChEBI" id="CHEBI:597326"/>
    </ligand>
</feature>
<feature type="binding site" evidence="1">
    <location>
        <position position="183"/>
    </location>
    <ligand>
        <name>pyridoxal 5'-phosphate</name>
        <dbReference type="ChEBI" id="CHEBI:597326"/>
    </ligand>
</feature>
<feature type="binding site" evidence="1">
    <location>
        <begin position="203"/>
        <end position="205"/>
    </location>
    <ligand>
        <name>pyridoxal 5'-phosphate</name>
        <dbReference type="ChEBI" id="CHEBI:597326"/>
    </ligand>
</feature>
<feature type="binding site" evidence="1">
    <location>
        <position position="241"/>
    </location>
    <ligand>
        <name>pyridoxal 5'-phosphate</name>
        <dbReference type="ChEBI" id="CHEBI:597326"/>
    </ligand>
</feature>
<feature type="binding site" description="via persulfide group" evidence="1">
    <location>
        <position position="328"/>
    </location>
    <ligand>
        <name>[2Fe-2S] cluster</name>
        <dbReference type="ChEBI" id="CHEBI:190135"/>
        <note>ligand shared with IscU</note>
    </ligand>
</feature>
<feature type="modified residue" description="N6-(pyridoxal phosphate)lysine" evidence="1">
    <location>
        <position position="206"/>
    </location>
</feature>
<feature type="turn" evidence="3">
    <location>
        <begin position="9"/>
        <end position="11"/>
    </location>
</feature>
<feature type="helix" evidence="3">
    <location>
        <begin position="17"/>
        <end position="27"/>
    </location>
</feature>
<feature type="strand" evidence="6">
    <location>
        <begin position="36"/>
        <end position="38"/>
    </location>
</feature>
<feature type="helix" evidence="3">
    <location>
        <begin position="39"/>
        <end position="42"/>
    </location>
</feature>
<feature type="helix" evidence="3">
    <location>
        <begin position="45"/>
        <end position="59"/>
    </location>
</feature>
<feature type="strand" evidence="3">
    <location>
        <begin position="65"/>
        <end position="71"/>
    </location>
</feature>
<feature type="helix" evidence="3">
    <location>
        <begin position="73"/>
        <end position="87"/>
    </location>
</feature>
<feature type="helix" evidence="3">
    <location>
        <begin position="89"/>
        <end position="92"/>
    </location>
</feature>
<feature type="strand" evidence="3">
    <location>
        <begin position="96"/>
        <end position="100"/>
    </location>
</feature>
<feature type="helix" evidence="3">
    <location>
        <begin position="105"/>
        <end position="116"/>
    </location>
</feature>
<feature type="strand" evidence="3">
    <location>
        <begin position="120"/>
        <end position="124"/>
    </location>
</feature>
<feature type="strand" evidence="4">
    <location>
        <begin position="128"/>
        <end position="131"/>
    </location>
</feature>
<feature type="helix" evidence="3">
    <location>
        <begin position="134"/>
        <end position="140"/>
    </location>
</feature>
<feature type="strand" evidence="3">
    <location>
        <begin position="145"/>
        <end position="149"/>
    </location>
</feature>
<feature type="turn" evidence="3">
    <location>
        <begin position="155"/>
        <end position="157"/>
    </location>
</feature>
<feature type="helix" evidence="3">
    <location>
        <begin position="163"/>
        <end position="173"/>
    </location>
</feature>
<feature type="strand" evidence="3">
    <location>
        <begin position="176"/>
        <end position="180"/>
    </location>
</feature>
<feature type="turn" evidence="3">
    <location>
        <begin position="182"/>
        <end position="187"/>
    </location>
</feature>
<feature type="turn" evidence="3">
    <location>
        <begin position="192"/>
        <end position="196"/>
    </location>
</feature>
<feature type="strand" evidence="3">
    <location>
        <begin position="198"/>
        <end position="203"/>
    </location>
</feature>
<feature type="helix" evidence="2">
    <location>
        <begin position="204"/>
        <end position="206"/>
    </location>
</feature>
<feature type="strand" evidence="3">
    <location>
        <begin position="214"/>
        <end position="218"/>
    </location>
</feature>
<feature type="turn" evidence="3">
    <location>
        <begin position="233"/>
        <end position="237"/>
    </location>
</feature>
<feature type="helix" evidence="3">
    <location>
        <begin position="244"/>
        <end position="259"/>
    </location>
</feature>
<feature type="helix" evidence="3">
    <location>
        <begin position="261"/>
        <end position="266"/>
    </location>
</feature>
<feature type="helix" evidence="3">
    <location>
        <begin position="268"/>
        <end position="280"/>
    </location>
</feature>
<feature type="strand" evidence="5">
    <location>
        <begin position="282"/>
        <end position="284"/>
    </location>
</feature>
<feature type="strand" evidence="3">
    <location>
        <begin position="285"/>
        <end position="289"/>
    </location>
</feature>
<feature type="strand" evidence="3">
    <location>
        <begin position="291"/>
        <end position="294"/>
    </location>
</feature>
<feature type="strand" evidence="3">
    <location>
        <begin position="298"/>
        <end position="306"/>
    </location>
</feature>
<feature type="helix" evidence="3">
    <location>
        <begin position="308"/>
        <end position="317"/>
    </location>
</feature>
<feature type="strand" evidence="3">
    <location>
        <begin position="323"/>
        <end position="326"/>
    </location>
</feature>
<feature type="strand" evidence="3">
    <location>
        <begin position="351"/>
        <end position="356"/>
    </location>
</feature>
<feature type="helix" evidence="3">
    <location>
        <begin position="363"/>
        <end position="384"/>
    </location>
</feature>
<gene>
    <name evidence="1" type="primary">iscS</name>
    <name type="ordered locus">HP_0220</name>
</gene>
<name>ISCS_HELPY</name>
<sequence>MLQRIYLDNNATTRIDPKVKEIMDPFLRDHYGNPSSLHQFGTETHPAIAEALDKLYKGINARDIDDVIITSCATESNNWVLKGVYFDECLKKGKNHIVTTVAEHPAVRSTCNFLESLGVEVTYLPINEHGSITAEQVKEAITEKTALVSVMWANNETGLIFPIEEIGAICKEKGVLFHTDAVQAIGKIPVDVLKANADFLSFSAHKFHGPKGIGGLYIRSGVGLTPLFHGGEHMNGRRSGTLNVPYIVGMGEAMKLAVEHLDYEKEVVGKLRDKLEEALLKIPDVMVVGDRIHRVPNTTLVSVRGIEGEAMLWDLNRSNIAASTGSACASEDLEANPVMVAIGASKELAHTAIRLSLSRFNTEAEIDKTIEVFSQAAVRLRNISSSY</sequence>
<evidence type="ECO:0000255" key="1">
    <source>
        <dbReference type="HAMAP-Rule" id="MF_00331"/>
    </source>
</evidence>
<evidence type="ECO:0007829" key="2">
    <source>
        <dbReference type="PDB" id="5WT2"/>
    </source>
</evidence>
<evidence type="ECO:0007829" key="3">
    <source>
        <dbReference type="PDB" id="5WT5"/>
    </source>
</evidence>
<evidence type="ECO:0007829" key="4">
    <source>
        <dbReference type="PDB" id="6KG0"/>
    </source>
</evidence>
<evidence type="ECO:0007829" key="5">
    <source>
        <dbReference type="PDB" id="7CET"/>
    </source>
</evidence>
<evidence type="ECO:0007829" key="6">
    <source>
        <dbReference type="PDB" id="7XEQ"/>
    </source>
</evidence>
<protein>
    <recommendedName>
        <fullName evidence="1">Cysteine desulfurase IscS</fullName>
        <ecNumber evidence="1">2.8.1.7</ecNumber>
    </recommendedName>
</protein>
<keyword id="KW-0001">2Fe-2S</keyword>
<keyword id="KW-0002">3D-structure</keyword>
<keyword id="KW-0963">Cytoplasm</keyword>
<keyword id="KW-0408">Iron</keyword>
<keyword id="KW-0411">Iron-sulfur</keyword>
<keyword id="KW-0479">Metal-binding</keyword>
<keyword id="KW-0663">Pyridoxal phosphate</keyword>
<keyword id="KW-1185">Reference proteome</keyword>
<keyword id="KW-0808">Transferase</keyword>
<reference key="1">
    <citation type="journal article" date="1997" name="Nature">
        <title>The complete genome sequence of the gastric pathogen Helicobacter pylori.</title>
        <authorList>
            <person name="Tomb J.-F."/>
            <person name="White O."/>
            <person name="Kerlavage A.R."/>
            <person name="Clayton R.A."/>
            <person name="Sutton G.G."/>
            <person name="Fleischmann R.D."/>
            <person name="Ketchum K.A."/>
            <person name="Klenk H.-P."/>
            <person name="Gill S.R."/>
            <person name="Dougherty B.A."/>
            <person name="Nelson K.E."/>
            <person name="Quackenbush J."/>
            <person name="Zhou L."/>
            <person name="Kirkness E.F."/>
            <person name="Peterson S.N."/>
            <person name="Loftus B.J."/>
            <person name="Richardson D.L."/>
            <person name="Dodson R.J."/>
            <person name="Khalak H.G."/>
            <person name="Glodek A."/>
            <person name="McKenney K."/>
            <person name="FitzGerald L.M."/>
            <person name="Lee N."/>
            <person name="Adams M.D."/>
            <person name="Hickey E.K."/>
            <person name="Berg D.E."/>
            <person name="Gocayne J.D."/>
            <person name="Utterback T.R."/>
            <person name="Peterson J.D."/>
            <person name="Kelley J.M."/>
            <person name="Cotton M.D."/>
            <person name="Weidman J.F."/>
            <person name="Fujii C."/>
            <person name="Bowman C."/>
            <person name="Watthey L."/>
            <person name="Wallin E."/>
            <person name="Hayes W.S."/>
            <person name="Borodovsky M."/>
            <person name="Karp P.D."/>
            <person name="Smith H.O."/>
            <person name="Fraser C.M."/>
            <person name="Venter J.C."/>
        </authorList>
    </citation>
    <scope>NUCLEOTIDE SEQUENCE [LARGE SCALE GENOMIC DNA]</scope>
    <source>
        <strain>ATCC 700392 / 26695</strain>
    </source>
</reference>
<proteinExistence type="evidence at protein level"/>
<accession>O25008</accession>
<comment type="function">
    <text evidence="1">Master enzyme that delivers sulfur to a number of partners involved in Fe-S cluster assembly, tRNA modification or cofactor biosynthesis. Catalyzes the removal of elemental sulfur atoms from cysteine to produce alanine. Functions as a sulfur delivery protein for Fe-S cluster synthesis onto IscU, an Fe-S scaffold assembly protein, as well as other S acceptor proteins.</text>
</comment>
<comment type="catalytic activity">
    <reaction evidence="1">
        <text>(sulfur carrier)-H + L-cysteine = (sulfur carrier)-SH + L-alanine</text>
        <dbReference type="Rhea" id="RHEA:43892"/>
        <dbReference type="Rhea" id="RHEA-COMP:14737"/>
        <dbReference type="Rhea" id="RHEA-COMP:14739"/>
        <dbReference type="ChEBI" id="CHEBI:29917"/>
        <dbReference type="ChEBI" id="CHEBI:35235"/>
        <dbReference type="ChEBI" id="CHEBI:57972"/>
        <dbReference type="ChEBI" id="CHEBI:64428"/>
        <dbReference type="EC" id="2.8.1.7"/>
    </reaction>
</comment>
<comment type="cofactor">
    <cofactor evidence="1">
        <name>pyridoxal 5'-phosphate</name>
        <dbReference type="ChEBI" id="CHEBI:597326"/>
    </cofactor>
</comment>
<comment type="pathway">
    <text evidence="1">Cofactor biosynthesis; iron-sulfur cluster biosynthesis.</text>
</comment>
<comment type="subunit">
    <text evidence="1">Homodimer. Forms a heterotetramer with IscU, interacts with other sulfur acceptors.</text>
</comment>
<comment type="interaction">
    <interactant intactId="EBI-7607228">
        <id>O25008</id>
    </interactant>
    <interactant intactId="EBI-7731253">
        <id>O25852</id>
        <label>HP_1262</label>
    </interactant>
    <organismsDiffer>false</organismsDiffer>
    <experiments>3</experiments>
</comment>
<comment type="subcellular location">
    <subcellularLocation>
        <location evidence="1">Cytoplasm</location>
    </subcellularLocation>
</comment>
<comment type="similarity">
    <text evidence="1">Belongs to the class-V pyridoxal-phosphate-dependent aminotransferase family. NifS/IscS subfamily.</text>
</comment>
<organism>
    <name type="scientific">Helicobacter pylori (strain ATCC 700392 / 26695)</name>
    <name type="common">Campylobacter pylori</name>
    <dbReference type="NCBI Taxonomy" id="85962"/>
    <lineage>
        <taxon>Bacteria</taxon>
        <taxon>Pseudomonadati</taxon>
        <taxon>Campylobacterota</taxon>
        <taxon>Epsilonproteobacteria</taxon>
        <taxon>Campylobacterales</taxon>
        <taxon>Helicobacteraceae</taxon>
        <taxon>Helicobacter</taxon>
    </lineage>
</organism>
<dbReference type="EC" id="2.8.1.7" evidence="1"/>
<dbReference type="EMBL" id="AE000511">
    <property type="protein sequence ID" value="AAD07288.1"/>
    <property type="molecule type" value="Genomic_DNA"/>
</dbReference>
<dbReference type="PIR" id="D64547">
    <property type="entry name" value="D64547"/>
</dbReference>
<dbReference type="RefSeq" id="NP_207018.1">
    <property type="nucleotide sequence ID" value="NC_000915.1"/>
</dbReference>
<dbReference type="RefSeq" id="WP_000941691.1">
    <property type="nucleotide sequence ID" value="NC_018939.1"/>
</dbReference>
<dbReference type="PDB" id="5WT2">
    <property type="method" value="X-ray"/>
    <property type="resolution" value="2.30 A"/>
    <property type="chains" value="A=1-387"/>
</dbReference>
<dbReference type="PDB" id="5WT4">
    <property type="method" value="X-ray"/>
    <property type="resolution" value="2.92 A"/>
    <property type="chains" value="A=1-387"/>
</dbReference>
<dbReference type="PDB" id="5WT5">
    <property type="method" value="X-ray"/>
    <property type="resolution" value="1.90 A"/>
    <property type="chains" value="A/B/C/D=1-387"/>
</dbReference>
<dbReference type="PDB" id="5WT6">
    <property type="method" value="X-ray"/>
    <property type="resolution" value="3.30 A"/>
    <property type="chains" value="A=1-387"/>
</dbReference>
<dbReference type="PDB" id="6KG0">
    <property type="method" value="X-ray"/>
    <property type="resolution" value="2.78 A"/>
    <property type="chains" value="A=1-387"/>
</dbReference>
<dbReference type="PDB" id="6KG1">
    <property type="method" value="X-ray"/>
    <property type="resolution" value="2.70 A"/>
    <property type="chains" value="A=1-387"/>
</dbReference>
<dbReference type="PDB" id="7CET">
    <property type="method" value="X-ray"/>
    <property type="resolution" value="2.64 A"/>
    <property type="chains" value="A=1-387"/>
</dbReference>
<dbReference type="PDB" id="7CEU">
    <property type="method" value="X-ray"/>
    <property type="resolution" value="2.90 A"/>
    <property type="chains" value="A=1-387"/>
</dbReference>
<dbReference type="PDB" id="7XEQ">
    <property type="method" value="X-ray"/>
    <property type="resolution" value="2.90 A"/>
    <property type="chains" value="A=1-387"/>
</dbReference>
<dbReference type="PDB" id="7XES">
    <property type="method" value="X-ray"/>
    <property type="resolution" value="3.00 A"/>
    <property type="chains" value="A=1-387"/>
</dbReference>
<dbReference type="PDBsum" id="5WT2"/>
<dbReference type="PDBsum" id="5WT4"/>
<dbReference type="PDBsum" id="5WT5"/>
<dbReference type="PDBsum" id="5WT6"/>
<dbReference type="PDBsum" id="6KG0"/>
<dbReference type="PDBsum" id="6KG1"/>
<dbReference type="PDBsum" id="7CET"/>
<dbReference type="PDBsum" id="7CEU"/>
<dbReference type="PDBsum" id="7XEQ"/>
<dbReference type="PDBsum" id="7XES"/>
<dbReference type="SMR" id="O25008"/>
<dbReference type="DIP" id="DIP-3630N"/>
<dbReference type="FunCoup" id="O25008">
    <property type="interactions" value="355"/>
</dbReference>
<dbReference type="IntAct" id="O25008">
    <property type="interactions" value="5"/>
</dbReference>
<dbReference type="MINT" id="O25008"/>
<dbReference type="STRING" id="85962.HP_0220"/>
<dbReference type="PaxDb" id="85962-C694_01110"/>
<dbReference type="EnsemblBacteria" id="AAD07288">
    <property type="protein sequence ID" value="AAD07288"/>
    <property type="gene ID" value="HP_0220"/>
</dbReference>
<dbReference type="KEGG" id="heo:C694_01110"/>
<dbReference type="KEGG" id="hpy:HP_0220"/>
<dbReference type="PATRIC" id="fig|85962.47.peg.238"/>
<dbReference type="eggNOG" id="COG1104">
    <property type="taxonomic scope" value="Bacteria"/>
</dbReference>
<dbReference type="InParanoid" id="O25008"/>
<dbReference type="OrthoDB" id="9808002at2"/>
<dbReference type="PhylomeDB" id="O25008"/>
<dbReference type="BRENDA" id="2.8.1.7">
    <property type="organism ID" value="2604"/>
</dbReference>
<dbReference type="UniPathway" id="UPA00266"/>
<dbReference type="Proteomes" id="UP000000429">
    <property type="component" value="Chromosome"/>
</dbReference>
<dbReference type="GO" id="GO:0005737">
    <property type="term" value="C:cytoplasm"/>
    <property type="evidence" value="ECO:0007669"/>
    <property type="project" value="UniProtKB-SubCell"/>
</dbReference>
<dbReference type="GO" id="GO:0051537">
    <property type="term" value="F:2 iron, 2 sulfur cluster binding"/>
    <property type="evidence" value="ECO:0007669"/>
    <property type="project" value="UniProtKB-UniRule"/>
</dbReference>
<dbReference type="GO" id="GO:0031071">
    <property type="term" value="F:cysteine desulfurase activity"/>
    <property type="evidence" value="ECO:0007669"/>
    <property type="project" value="UniProtKB-UniRule"/>
</dbReference>
<dbReference type="GO" id="GO:0046872">
    <property type="term" value="F:metal ion binding"/>
    <property type="evidence" value="ECO:0007669"/>
    <property type="project" value="UniProtKB-KW"/>
</dbReference>
<dbReference type="GO" id="GO:0030170">
    <property type="term" value="F:pyridoxal phosphate binding"/>
    <property type="evidence" value="ECO:0007669"/>
    <property type="project" value="UniProtKB-UniRule"/>
</dbReference>
<dbReference type="GO" id="GO:0044571">
    <property type="term" value="P:[2Fe-2S] cluster assembly"/>
    <property type="evidence" value="ECO:0007669"/>
    <property type="project" value="UniProtKB-UniRule"/>
</dbReference>
<dbReference type="GO" id="GO:0006534">
    <property type="term" value="P:cysteine metabolic process"/>
    <property type="evidence" value="ECO:0007669"/>
    <property type="project" value="InterPro"/>
</dbReference>
<dbReference type="FunFam" id="3.40.640.10:FF:000084">
    <property type="entry name" value="IscS-like cysteine desulfurase"/>
    <property type="match status" value="1"/>
</dbReference>
<dbReference type="Gene3D" id="3.90.1150.10">
    <property type="entry name" value="Aspartate Aminotransferase, domain 1"/>
    <property type="match status" value="1"/>
</dbReference>
<dbReference type="Gene3D" id="3.40.640.10">
    <property type="entry name" value="Type I PLP-dependent aspartate aminotransferase-like (Major domain)"/>
    <property type="match status" value="1"/>
</dbReference>
<dbReference type="HAMAP" id="MF_00331">
    <property type="entry name" value="Cys_desulf_IscS"/>
    <property type="match status" value="1"/>
</dbReference>
<dbReference type="InterPro" id="IPR000192">
    <property type="entry name" value="Aminotrans_V_dom"/>
</dbReference>
<dbReference type="InterPro" id="IPR010240">
    <property type="entry name" value="Cys_deSase_IscS"/>
</dbReference>
<dbReference type="InterPro" id="IPR017773">
    <property type="entry name" value="Cys_deSase_NifS_proteobacteria"/>
</dbReference>
<dbReference type="InterPro" id="IPR016454">
    <property type="entry name" value="Cysteine_dSase"/>
</dbReference>
<dbReference type="InterPro" id="IPR015424">
    <property type="entry name" value="PyrdxlP-dep_Trfase"/>
</dbReference>
<dbReference type="InterPro" id="IPR015421">
    <property type="entry name" value="PyrdxlP-dep_Trfase_major"/>
</dbReference>
<dbReference type="InterPro" id="IPR015422">
    <property type="entry name" value="PyrdxlP-dep_Trfase_small"/>
</dbReference>
<dbReference type="NCBIfam" id="TIGR03403">
    <property type="entry name" value="nifS_epsilon"/>
    <property type="match status" value="1"/>
</dbReference>
<dbReference type="PANTHER" id="PTHR11601:SF34">
    <property type="entry name" value="CYSTEINE DESULFURASE"/>
    <property type="match status" value="1"/>
</dbReference>
<dbReference type="PANTHER" id="PTHR11601">
    <property type="entry name" value="CYSTEINE DESULFURYLASE FAMILY MEMBER"/>
    <property type="match status" value="1"/>
</dbReference>
<dbReference type="Pfam" id="PF00266">
    <property type="entry name" value="Aminotran_5"/>
    <property type="match status" value="1"/>
</dbReference>
<dbReference type="PIRSF" id="PIRSF005572">
    <property type="entry name" value="NifS"/>
    <property type="match status" value="1"/>
</dbReference>
<dbReference type="SUPFAM" id="SSF53383">
    <property type="entry name" value="PLP-dependent transferases"/>
    <property type="match status" value="1"/>
</dbReference>